<accession>Q3KKZ6</accession>
<reference key="1">
    <citation type="journal article" date="2005" name="Infect. Immun.">
        <title>Comparative genomic analysis of Chlamydia trachomatis oculotropic and genitotropic strains.</title>
        <authorList>
            <person name="Carlson J.H."/>
            <person name="Porcella S.F."/>
            <person name="McClarty G."/>
            <person name="Caldwell H.D."/>
        </authorList>
    </citation>
    <scope>NUCLEOTIDE SEQUENCE [LARGE SCALE GENOMIC DNA]</scope>
    <source>
        <strain>ATCC VR-571B / DSM 19440 / HAR-13</strain>
    </source>
</reference>
<evidence type="ECO:0000255" key="1">
    <source>
        <dbReference type="HAMAP-Rule" id="MF_00379"/>
    </source>
</evidence>
<protein>
    <recommendedName>
        <fullName evidence="1">tRNA modification GTPase MnmE</fullName>
        <ecNumber evidence="1">3.6.-.-</ecNumber>
    </recommendedName>
</protein>
<comment type="function">
    <text evidence="1">Exhibits a very high intrinsic GTPase hydrolysis rate. Involved in the addition of a carboxymethylaminomethyl (cmnm) group at the wobble position (U34) of certain tRNAs, forming tRNA-cmnm(5)s(2)U34.</text>
</comment>
<comment type="cofactor">
    <cofactor evidence="1">
        <name>K(+)</name>
        <dbReference type="ChEBI" id="CHEBI:29103"/>
    </cofactor>
    <text evidence="1">Binds 1 potassium ion per subunit.</text>
</comment>
<comment type="subunit">
    <text evidence="1">Homodimer. Heterotetramer of two MnmE and two MnmG subunits.</text>
</comment>
<comment type="subcellular location">
    <subcellularLocation>
        <location evidence="1">Cytoplasm</location>
    </subcellularLocation>
</comment>
<comment type="similarity">
    <text evidence="1">Belongs to the TRAFAC class TrmE-Era-EngA-EngB-Septin-like GTPase superfamily. TrmE GTPase family.</text>
</comment>
<sequence>MLRNDTITAIATPPGEGSIAIVRVSGPDAISISDRIFSGNIAGYASHTAHLGTVSHNAVYIDQALVLVMRAPRSFTGEDIVEFQCHGGYFACSQIVNTLLAEGARAALPGEFSQRAFLNGKIDLIQAEAIQQLIAADNIDAFRIAQNQFQGHTSQAISSISSLIIEALAYIEVLADFPEEDIETEDSLPKHRIMEALSITDELLSSFDEGQRLAQGTSIVLAGLPNAGKSSILNALTQKNRAIVTDIPGTTRDILEENWVLQGKNLRLIDSAGLRETENLVEKEGIARAREAMSQAEGILWVVDASQPLPEFPTILYQKPTILLWNKCDIVSPPQIEVPFQQISVSAKTGEGLLELKQALQKWLNTTQLGKSSKIFLVSARHHSLLHSVYTCLTAALNGFTEHLPNECIALDLRQALHSIGNLSGSEVTENVLGEIFSKFCIGK</sequence>
<gene>
    <name evidence="1" type="primary">mnmE</name>
    <name evidence="1" type="synonym">trmE</name>
    <name type="ordered locus">CTA_0759</name>
</gene>
<organism>
    <name type="scientific">Chlamydia trachomatis serovar A (strain ATCC VR-571B / DSM 19440 / HAR-13)</name>
    <dbReference type="NCBI Taxonomy" id="315277"/>
    <lineage>
        <taxon>Bacteria</taxon>
        <taxon>Pseudomonadati</taxon>
        <taxon>Chlamydiota</taxon>
        <taxon>Chlamydiia</taxon>
        <taxon>Chlamydiales</taxon>
        <taxon>Chlamydiaceae</taxon>
        <taxon>Chlamydia/Chlamydophila group</taxon>
        <taxon>Chlamydia</taxon>
    </lineage>
</organism>
<dbReference type="EC" id="3.6.-.-" evidence="1"/>
<dbReference type="EMBL" id="CP000051">
    <property type="protein sequence ID" value="AAX50976.1"/>
    <property type="molecule type" value="Genomic_DNA"/>
</dbReference>
<dbReference type="RefSeq" id="WP_011324837.1">
    <property type="nucleotide sequence ID" value="NC_007429.1"/>
</dbReference>
<dbReference type="SMR" id="Q3KKZ6"/>
<dbReference type="KEGG" id="cta:CTA_0759"/>
<dbReference type="HOGENOM" id="CLU_019624_4_1_0"/>
<dbReference type="Proteomes" id="UP000002532">
    <property type="component" value="Chromosome"/>
</dbReference>
<dbReference type="GO" id="GO:0005829">
    <property type="term" value="C:cytosol"/>
    <property type="evidence" value="ECO:0007669"/>
    <property type="project" value="TreeGrafter"/>
</dbReference>
<dbReference type="GO" id="GO:0005525">
    <property type="term" value="F:GTP binding"/>
    <property type="evidence" value="ECO:0007669"/>
    <property type="project" value="UniProtKB-UniRule"/>
</dbReference>
<dbReference type="GO" id="GO:0003924">
    <property type="term" value="F:GTPase activity"/>
    <property type="evidence" value="ECO:0007669"/>
    <property type="project" value="UniProtKB-UniRule"/>
</dbReference>
<dbReference type="GO" id="GO:0046872">
    <property type="term" value="F:metal ion binding"/>
    <property type="evidence" value="ECO:0007669"/>
    <property type="project" value="UniProtKB-KW"/>
</dbReference>
<dbReference type="GO" id="GO:0030488">
    <property type="term" value="P:tRNA methylation"/>
    <property type="evidence" value="ECO:0007669"/>
    <property type="project" value="TreeGrafter"/>
</dbReference>
<dbReference type="GO" id="GO:0002098">
    <property type="term" value="P:tRNA wobble uridine modification"/>
    <property type="evidence" value="ECO:0007669"/>
    <property type="project" value="TreeGrafter"/>
</dbReference>
<dbReference type="CDD" id="cd04164">
    <property type="entry name" value="trmE"/>
    <property type="match status" value="1"/>
</dbReference>
<dbReference type="CDD" id="cd14858">
    <property type="entry name" value="TrmE_N"/>
    <property type="match status" value="1"/>
</dbReference>
<dbReference type="FunFam" id="3.30.1360.120:FF:000003">
    <property type="entry name" value="tRNA modification GTPase MnmE"/>
    <property type="match status" value="1"/>
</dbReference>
<dbReference type="FunFam" id="3.40.50.300:FF:001376">
    <property type="entry name" value="tRNA modification GTPase MnmE"/>
    <property type="match status" value="1"/>
</dbReference>
<dbReference type="Gene3D" id="3.40.50.300">
    <property type="entry name" value="P-loop containing nucleotide triphosphate hydrolases"/>
    <property type="match status" value="1"/>
</dbReference>
<dbReference type="Gene3D" id="3.30.1360.120">
    <property type="entry name" value="Probable tRNA modification gtpase trme, domain 1"/>
    <property type="match status" value="1"/>
</dbReference>
<dbReference type="Gene3D" id="1.20.120.430">
    <property type="entry name" value="tRNA modification GTPase MnmE domain 2"/>
    <property type="match status" value="1"/>
</dbReference>
<dbReference type="HAMAP" id="MF_00379">
    <property type="entry name" value="GTPase_MnmE"/>
    <property type="match status" value="1"/>
</dbReference>
<dbReference type="InterPro" id="IPR031168">
    <property type="entry name" value="G_TrmE"/>
</dbReference>
<dbReference type="InterPro" id="IPR006073">
    <property type="entry name" value="GTP-bd"/>
</dbReference>
<dbReference type="InterPro" id="IPR018948">
    <property type="entry name" value="GTP-bd_TrmE_N"/>
</dbReference>
<dbReference type="InterPro" id="IPR004520">
    <property type="entry name" value="GTPase_MnmE"/>
</dbReference>
<dbReference type="InterPro" id="IPR027368">
    <property type="entry name" value="MnmE_dom2"/>
</dbReference>
<dbReference type="InterPro" id="IPR025867">
    <property type="entry name" value="MnmE_helical"/>
</dbReference>
<dbReference type="InterPro" id="IPR027417">
    <property type="entry name" value="P-loop_NTPase"/>
</dbReference>
<dbReference type="InterPro" id="IPR005225">
    <property type="entry name" value="Small_GTP-bd"/>
</dbReference>
<dbReference type="InterPro" id="IPR027266">
    <property type="entry name" value="TrmE/GcvT_dom1"/>
</dbReference>
<dbReference type="NCBIfam" id="TIGR00450">
    <property type="entry name" value="mnmE_trmE_thdF"/>
    <property type="match status" value="1"/>
</dbReference>
<dbReference type="NCBIfam" id="TIGR00231">
    <property type="entry name" value="small_GTP"/>
    <property type="match status" value="1"/>
</dbReference>
<dbReference type="PANTHER" id="PTHR42714">
    <property type="entry name" value="TRNA MODIFICATION GTPASE GTPBP3"/>
    <property type="match status" value="1"/>
</dbReference>
<dbReference type="PANTHER" id="PTHR42714:SF2">
    <property type="entry name" value="TRNA MODIFICATION GTPASE GTPBP3, MITOCHONDRIAL"/>
    <property type="match status" value="1"/>
</dbReference>
<dbReference type="Pfam" id="PF01926">
    <property type="entry name" value="MMR_HSR1"/>
    <property type="match status" value="1"/>
</dbReference>
<dbReference type="Pfam" id="PF12631">
    <property type="entry name" value="MnmE_helical"/>
    <property type="match status" value="1"/>
</dbReference>
<dbReference type="Pfam" id="PF10396">
    <property type="entry name" value="TrmE_N"/>
    <property type="match status" value="1"/>
</dbReference>
<dbReference type="SUPFAM" id="SSF52540">
    <property type="entry name" value="P-loop containing nucleoside triphosphate hydrolases"/>
    <property type="match status" value="1"/>
</dbReference>
<dbReference type="PROSITE" id="PS51709">
    <property type="entry name" value="G_TRME"/>
    <property type="match status" value="1"/>
</dbReference>
<keyword id="KW-0963">Cytoplasm</keyword>
<keyword id="KW-0342">GTP-binding</keyword>
<keyword id="KW-0378">Hydrolase</keyword>
<keyword id="KW-0460">Magnesium</keyword>
<keyword id="KW-0479">Metal-binding</keyword>
<keyword id="KW-0547">Nucleotide-binding</keyword>
<keyword id="KW-0630">Potassium</keyword>
<keyword id="KW-0819">tRNA processing</keyword>
<name>MNME_CHLTA</name>
<feature type="chain" id="PRO_1000048816" description="tRNA modification GTPase MnmE">
    <location>
        <begin position="1"/>
        <end position="444"/>
    </location>
</feature>
<feature type="domain" description="TrmE-type G">
    <location>
        <begin position="216"/>
        <end position="365"/>
    </location>
</feature>
<feature type="binding site" evidence="1">
    <location>
        <position position="23"/>
    </location>
    <ligand>
        <name>(6S)-5-formyl-5,6,7,8-tetrahydrofolate</name>
        <dbReference type="ChEBI" id="CHEBI:57457"/>
    </ligand>
</feature>
<feature type="binding site" evidence="1">
    <location>
        <position position="82"/>
    </location>
    <ligand>
        <name>(6S)-5-formyl-5,6,7,8-tetrahydrofolate</name>
        <dbReference type="ChEBI" id="CHEBI:57457"/>
    </ligand>
</feature>
<feature type="binding site" evidence="1">
    <location>
        <position position="121"/>
    </location>
    <ligand>
        <name>(6S)-5-formyl-5,6,7,8-tetrahydrofolate</name>
        <dbReference type="ChEBI" id="CHEBI:57457"/>
    </ligand>
</feature>
<feature type="binding site" evidence="1">
    <location>
        <begin position="226"/>
        <end position="231"/>
    </location>
    <ligand>
        <name>GTP</name>
        <dbReference type="ChEBI" id="CHEBI:37565"/>
    </ligand>
</feature>
<feature type="binding site" evidence="1">
    <location>
        <position position="226"/>
    </location>
    <ligand>
        <name>K(+)</name>
        <dbReference type="ChEBI" id="CHEBI:29103"/>
    </ligand>
</feature>
<feature type="binding site" evidence="1">
    <location>
        <position position="230"/>
    </location>
    <ligand>
        <name>Mg(2+)</name>
        <dbReference type="ChEBI" id="CHEBI:18420"/>
    </ligand>
</feature>
<feature type="binding site" evidence="1">
    <location>
        <begin position="245"/>
        <end position="251"/>
    </location>
    <ligand>
        <name>GTP</name>
        <dbReference type="ChEBI" id="CHEBI:37565"/>
    </ligand>
</feature>
<feature type="binding site" evidence="1">
    <location>
        <position position="245"/>
    </location>
    <ligand>
        <name>K(+)</name>
        <dbReference type="ChEBI" id="CHEBI:29103"/>
    </ligand>
</feature>
<feature type="binding site" evidence="1">
    <location>
        <position position="247"/>
    </location>
    <ligand>
        <name>K(+)</name>
        <dbReference type="ChEBI" id="CHEBI:29103"/>
    </ligand>
</feature>
<feature type="binding site" evidence="1">
    <location>
        <position position="250"/>
    </location>
    <ligand>
        <name>K(+)</name>
        <dbReference type="ChEBI" id="CHEBI:29103"/>
    </ligand>
</feature>
<feature type="binding site" evidence="1">
    <location>
        <position position="251"/>
    </location>
    <ligand>
        <name>Mg(2+)</name>
        <dbReference type="ChEBI" id="CHEBI:18420"/>
    </ligand>
</feature>
<feature type="binding site" evidence="1">
    <location>
        <begin position="270"/>
        <end position="273"/>
    </location>
    <ligand>
        <name>GTP</name>
        <dbReference type="ChEBI" id="CHEBI:37565"/>
    </ligand>
</feature>
<feature type="binding site" evidence="1">
    <location>
        <position position="444"/>
    </location>
    <ligand>
        <name>(6S)-5-formyl-5,6,7,8-tetrahydrofolate</name>
        <dbReference type="ChEBI" id="CHEBI:57457"/>
    </ligand>
</feature>
<proteinExistence type="inferred from homology"/>